<organism>
    <name type="scientific">Nicotiana tabacum</name>
    <name type="common">Common tobacco</name>
    <dbReference type="NCBI Taxonomy" id="4097"/>
    <lineage>
        <taxon>Eukaryota</taxon>
        <taxon>Viridiplantae</taxon>
        <taxon>Streptophyta</taxon>
        <taxon>Embryophyta</taxon>
        <taxon>Tracheophyta</taxon>
        <taxon>Spermatophyta</taxon>
        <taxon>Magnoliopsida</taxon>
        <taxon>eudicotyledons</taxon>
        <taxon>Gunneridae</taxon>
        <taxon>Pentapetalae</taxon>
        <taxon>asterids</taxon>
        <taxon>lamiids</taxon>
        <taxon>Solanales</taxon>
        <taxon>Solanaceae</taxon>
        <taxon>Nicotianoideae</taxon>
        <taxon>Nicotianeae</taxon>
        <taxon>Nicotiana</taxon>
    </lineage>
</organism>
<reference key="1">
    <citation type="journal article" date="1999" name="Plant Mol. Biol.">
        <title>Structure and expression of the gene family encoding putrescine N-methyltransferase in Nicotiana tabacum: new clues to the evolutionary origin of cultivated tobacco.</title>
        <authorList>
            <person name="Riechers D.E."/>
            <person name="Timko M.P."/>
        </authorList>
    </citation>
    <scope>NUCLEOTIDE SEQUENCE [GENOMIC DNA]</scope>
    <scope>TISSUE SPECIFICITY</scope>
    <scope>INDUCTION BY YOUNG AERIAL TISSUES REMOVAL</scope>
    <scope>GENE FAMILY</scope>
    <source>
        <strain>cv. Xanthi</strain>
    </source>
</reference>
<reference key="2">
    <citation type="journal article" date="2014" name="Nat. Commun.">
        <title>The tobacco genome sequence and its comparison with those of tomato and potato.</title>
        <authorList>
            <person name="Sierro N."/>
            <person name="Battey J.N."/>
            <person name="Ouadi S."/>
            <person name="Bakaher N."/>
            <person name="Bovet L."/>
            <person name="Willig A."/>
            <person name="Goepfert S."/>
            <person name="Peitsch M.C."/>
            <person name="Ivanov N.V."/>
        </authorList>
    </citation>
    <scope>NUCLEOTIDE SEQUENCE [LARGE SCALE GENOMIC DNA]</scope>
    <source>
        <strain>cv. TN90</strain>
    </source>
</reference>
<reference key="3">
    <citation type="journal article" date="2011" name="J. Penelit. Tanam. Ind.">
        <title>Isolation of genes encoding putrescine N-methyltransferase and quinolinat phosphoribosyl transferase derived from Temanggung tobacco cultivar (Nicotiana tabacum).</title>
        <authorList>
            <person name="Basuki S."/>
            <person name="Mattjik N.A.A."/>
            <person name="Suwarso X."/>
            <person name="Wirnas D."/>
            <person name="Sudarsono S."/>
        </authorList>
    </citation>
    <scope>NUCLEOTIDE SEQUENCE [GENOMIC DNA / MRNA] OF 1-375</scope>
    <source>
        <strain>cv. Sindoro-1</strain>
    </source>
</reference>
<reference key="4">
    <citation type="journal article" date="1998" name="Plant Mol. Biol.">
        <title>Differential induction by methyl jasmonate of genes encoding ornithine decarboxylase and other enzymes involved in nicotine biosynthesis in tobacco cell cultures.</title>
        <authorList>
            <person name="Imanishi S."/>
            <person name="Hashizume K."/>
            <person name="Nakakita M."/>
            <person name="Kojima H."/>
            <person name="Matsubayashi Y."/>
            <person name="Hashimoto T."/>
            <person name="Sakagami Y."/>
            <person name="Yamada Y."/>
            <person name="Nakamura K."/>
        </authorList>
    </citation>
    <scope>INDUCTION BY JASMONATE</scope>
    <source>
        <strain>cv. Bright Yellow 2</strain>
    </source>
</reference>
<reference key="5">
    <citation type="journal article" date="2004" name="Plant Mol. Biol.">
        <title>Methyl jasmonate induced expression of the tobacco putrescine N -methyltransferase genes requires both G-box and GCC-motif elements.</title>
        <authorList>
            <person name="Xu B."/>
            <person name="Timko M."/>
        </authorList>
    </citation>
    <scope>INDUCTION BY JASMONATE</scope>
    <source>
        <strain>cv. Bright Yellow 2</strain>
    </source>
</reference>
<reference key="6">
    <citation type="journal article" date="2009" name="Phytochemistry">
        <title>Putrescine N-methyltransferase--the start for alkaloids.</title>
        <authorList>
            <person name="Biastoff S."/>
            <person name="Brandt W."/>
            <person name="Draeger B."/>
        </authorList>
    </citation>
    <scope>REVIEW ON PUTRESCINE N-METHYLTRANSFERASE</scope>
</reference>
<reference key="7">
    <citation type="journal article" date="2013" name="Phytochemistry">
        <title>Molecular genetics of alkaloid biosynthesis in Nicotiana tabacum.</title>
        <authorList>
            <person name="Dewey R.E."/>
            <person name="Xie J."/>
        </authorList>
    </citation>
    <scope>REVIEW ON ALKALOID BIOSYNTHESIS IN NICOTIANA TABACUM</scope>
</reference>
<reference key="8">
    <citation type="journal article" date="2015" name="Mol. Genet. Genomics">
        <title>Current status and prospects for the study of Nicotiana genomics, genetics, and nicotine biosynthesis genes.</title>
        <authorList>
            <person name="Wang X."/>
            <person name="Bennetzen J.L."/>
        </authorList>
    </citation>
    <scope>REVIEW ON NICOTINE BIOSYNTHESIS</scope>
</reference>
<reference key="9">
    <citation type="journal article" date="2019" name="Food Chem. Toxicol.">
        <title>Antiparasitic properties of leaf extracts derived from selected Nicotiana species and Nicotiana tabacum varieties.</title>
        <authorList>
            <person name="Schorderet Weber S."/>
            <person name="Kaminski K.P."/>
            <person name="Perret J.-L."/>
            <person name="Leroy P."/>
            <person name="Mazurov A."/>
            <person name="Peitsch M.C."/>
            <person name="Ivanov N.V."/>
            <person name="Hoeng J."/>
        </authorList>
    </citation>
    <scope>FUNCTION</scope>
    <source>
        <strain>cv. Burley Stella</strain>
        <strain>cv. Burley TN90</strain>
        <strain>cv. Virginia ITB 683</strain>
        <strain>cv. Virginia K326</strain>
    </source>
</reference>
<reference key="10">
    <citation type="journal article" date="2021" name="Plant Direct">
        <title>Impact of nicotine pathway downregulation on polyamine biosynthesis and leaf ripening in tobacco.</title>
        <authorList>
            <person name="Noelke G."/>
            <person name="Chudobova I."/>
            <person name="Houdelet M."/>
            <person name="Volke D."/>
            <person name="Lusso M."/>
            <person name="Frederick J."/>
            <person name="Kudithipudi C."/>
            <person name="Shen Y."/>
            <person name="Warek U."/>
            <person name="Strickland J.A."/>
            <person name="Xu D."/>
            <person name="Schinkel H."/>
            <person name="Schillberg S."/>
        </authorList>
    </citation>
    <scope>FUNCTION</scope>
    <scope>DISRUPTION PHENOTYPE</scope>
    <source>
        <strain>cv. Burley TN90 LC</strain>
    </source>
</reference>
<gene>
    <name evidence="9" type="primary">PMT3</name>
    <name type="ORF">LOC107799425</name>
</gene>
<evidence type="ECO:0000255" key="1">
    <source>
        <dbReference type="PROSITE-ProRule" id="PRU00354"/>
    </source>
</evidence>
<evidence type="ECO:0000255" key="2">
    <source>
        <dbReference type="PROSITE-ProRule" id="PRU00947"/>
    </source>
</evidence>
<evidence type="ECO:0000256" key="3">
    <source>
        <dbReference type="SAM" id="MobiDB-lite"/>
    </source>
</evidence>
<evidence type="ECO:0000269" key="4">
    <source>
    </source>
</evidence>
<evidence type="ECO:0000269" key="5">
    <source>
    </source>
</evidence>
<evidence type="ECO:0000269" key="6">
    <source>
    </source>
</evidence>
<evidence type="ECO:0000269" key="7">
    <source>
    </source>
</evidence>
<evidence type="ECO:0000269" key="8">
    <source>
    </source>
</evidence>
<evidence type="ECO:0000303" key="9">
    <source>
    </source>
</evidence>
<evidence type="ECO:0000305" key="10"/>
<dbReference type="EC" id="2.1.1.53" evidence="2"/>
<dbReference type="EMBL" id="AF126811">
    <property type="protein sequence ID" value="AAF14880.1"/>
    <property type="molecule type" value="Genomic_DNA"/>
</dbReference>
<dbReference type="EMBL" id="JQ438825">
    <property type="protein sequence ID" value="AFJ11561.1"/>
    <property type="molecule type" value="Genomic_DNA"/>
</dbReference>
<dbReference type="EMBL" id="JX978277">
    <property type="protein sequence ID" value="AGC24706.1"/>
    <property type="molecule type" value="mRNA"/>
</dbReference>
<dbReference type="SMR" id="Q9SEH5"/>
<dbReference type="STRING" id="4097.A0A1S4ANJ0"/>
<dbReference type="PaxDb" id="4097-Q9SEH5"/>
<dbReference type="PhylomeDB" id="Q9SEH5"/>
<dbReference type="BRENDA" id="2.1.1.53">
    <property type="organism ID" value="3645"/>
</dbReference>
<dbReference type="UniPathway" id="UPA00107"/>
<dbReference type="Proteomes" id="UP000084051">
    <property type="component" value="Unplaced"/>
</dbReference>
<dbReference type="GO" id="GO:0005829">
    <property type="term" value="C:cytosol"/>
    <property type="evidence" value="ECO:0000318"/>
    <property type="project" value="GO_Central"/>
</dbReference>
<dbReference type="GO" id="GO:0030750">
    <property type="term" value="F:putrescine N-methyltransferase activity"/>
    <property type="evidence" value="ECO:0007669"/>
    <property type="project" value="UniProtKB-EC"/>
</dbReference>
<dbReference type="GO" id="GO:0004766">
    <property type="term" value="F:spermidine synthase activity"/>
    <property type="evidence" value="ECO:0000318"/>
    <property type="project" value="GO_Central"/>
</dbReference>
<dbReference type="GO" id="GO:0009820">
    <property type="term" value="P:alkaloid metabolic process"/>
    <property type="evidence" value="ECO:0007669"/>
    <property type="project" value="UniProtKB-KW"/>
</dbReference>
<dbReference type="GO" id="GO:0032259">
    <property type="term" value="P:methylation"/>
    <property type="evidence" value="ECO:0007669"/>
    <property type="project" value="UniProtKB-KW"/>
</dbReference>
<dbReference type="GO" id="GO:0042179">
    <property type="term" value="P:nicotine biosynthetic process"/>
    <property type="evidence" value="ECO:0007669"/>
    <property type="project" value="UniProtKB-UniPathway"/>
</dbReference>
<dbReference type="GO" id="GO:0009446">
    <property type="term" value="P:putrescine biosynthetic process"/>
    <property type="evidence" value="ECO:0007669"/>
    <property type="project" value="UniProtKB-KW"/>
</dbReference>
<dbReference type="GO" id="GO:0009753">
    <property type="term" value="P:response to jasmonic acid"/>
    <property type="evidence" value="ECO:0000270"/>
    <property type="project" value="UniProtKB"/>
</dbReference>
<dbReference type="GO" id="GO:0008295">
    <property type="term" value="P:spermidine biosynthetic process"/>
    <property type="evidence" value="ECO:0000318"/>
    <property type="project" value="GO_Central"/>
</dbReference>
<dbReference type="CDD" id="cd02440">
    <property type="entry name" value="AdoMet_MTases"/>
    <property type="match status" value="1"/>
</dbReference>
<dbReference type="FunFam" id="2.30.140.10:FF:000001">
    <property type="entry name" value="SPE3p Spermidine synthase"/>
    <property type="match status" value="1"/>
</dbReference>
<dbReference type="FunFam" id="3.40.50.150:FF:000013">
    <property type="entry name" value="Spermidine synthase"/>
    <property type="match status" value="1"/>
</dbReference>
<dbReference type="Gene3D" id="2.30.140.10">
    <property type="entry name" value="Spermidine synthase, tetramerisation domain"/>
    <property type="match status" value="1"/>
</dbReference>
<dbReference type="Gene3D" id="3.40.50.150">
    <property type="entry name" value="Vaccinia Virus protein VP39"/>
    <property type="match status" value="1"/>
</dbReference>
<dbReference type="HAMAP" id="MF_00198">
    <property type="entry name" value="Spermidine_synth"/>
    <property type="match status" value="1"/>
</dbReference>
<dbReference type="InterPro" id="IPR030374">
    <property type="entry name" value="PABS"/>
</dbReference>
<dbReference type="InterPro" id="IPR030373">
    <property type="entry name" value="PABS_CS"/>
</dbReference>
<dbReference type="InterPro" id="IPR025803">
    <property type="entry name" value="Putrescine_N-MeTfrase"/>
</dbReference>
<dbReference type="InterPro" id="IPR029063">
    <property type="entry name" value="SAM-dependent_MTases_sf"/>
</dbReference>
<dbReference type="InterPro" id="IPR001045">
    <property type="entry name" value="Spermi_synthase"/>
</dbReference>
<dbReference type="InterPro" id="IPR035246">
    <property type="entry name" value="Spermidine_synt_N"/>
</dbReference>
<dbReference type="InterPro" id="IPR037163">
    <property type="entry name" value="Spermidine_synt_N_sf"/>
</dbReference>
<dbReference type="NCBIfam" id="NF002010">
    <property type="entry name" value="PRK00811.1"/>
    <property type="match status" value="1"/>
</dbReference>
<dbReference type="NCBIfam" id="TIGR00417">
    <property type="entry name" value="speE"/>
    <property type="match status" value="1"/>
</dbReference>
<dbReference type="PANTHER" id="PTHR11558:SF53">
    <property type="entry name" value="PUTRESCINE N-METHYLTRANSFERASE 1"/>
    <property type="match status" value="1"/>
</dbReference>
<dbReference type="PANTHER" id="PTHR11558">
    <property type="entry name" value="SPERMIDINE/SPERMINE SYNTHASE"/>
    <property type="match status" value="1"/>
</dbReference>
<dbReference type="Pfam" id="PF17284">
    <property type="entry name" value="Spermine_synt_N"/>
    <property type="match status" value="1"/>
</dbReference>
<dbReference type="Pfam" id="PF01564">
    <property type="entry name" value="Spermine_synth"/>
    <property type="match status" value="1"/>
</dbReference>
<dbReference type="SUPFAM" id="SSF53335">
    <property type="entry name" value="S-adenosyl-L-methionine-dependent methyltransferases"/>
    <property type="match status" value="1"/>
</dbReference>
<dbReference type="PROSITE" id="PS01330">
    <property type="entry name" value="PABS_1"/>
    <property type="match status" value="1"/>
</dbReference>
<dbReference type="PROSITE" id="PS51006">
    <property type="entry name" value="PABS_2"/>
    <property type="match status" value="1"/>
</dbReference>
<dbReference type="PROSITE" id="PS51615">
    <property type="entry name" value="SAM_MT_PUTRESCINE"/>
    <property type="match status" value="1"/>
</dbReference>
<protein>
    <recommendedName>
        <fullName evidence="9">Putrescine N-methyltransferase 3</fullName>
        <shortName evidence="9">NtPMT3</shortName>
        <ecNumber evidence="2">2.1.1.53</ecNumber>
    </recommendedName>
</protein>
<name>PMT3_TOBAC</name>
<keyword id="KW-0017">Alkaloid metabolism</keyword>
<keyword id="KW-0489">Methyltransferase</keyword>
<keyword id="KW-0620">Polyamine biosynthesis</keyword>
<keyword id="KW-0661">Putrescine biosynthesis</keyword>
<keyword id="KW-1185">Reference proteome</keyword>
<keyword id="KW-0949">S-adenosyl-L-methionine</keyword>
<keyword id="KW-0808">Transferase</keyword>
<sequence length="381" mass="41795">MEVISTNTNGSTIFKNGAIPMNGYQNGTSKHQNGHQNGTSEHRNGHQNGISEHQNGHQNGTSEHQNGHQNGTISHDNGNELQLLGSSNSIKPGWFSEFSALWPGEAFSLKVEKLLFQGKSDYQDVMLFESATYGKVLTLDGAIQHTENGGFPYTEMIVHLPLGSIPNPKKVLIIGGGIGFTLFEMLRYPTIEKIDIVEIDDVVVDVSRKFFPYLAANFSDPRVTLVLGDGAAFVKAAQAGYYDAIIVDSSDPIGPAKDLFERPFFEAVAKALRPGGVVCTQAESIWLHMHIIKQIIANCRQVFKGSVNYAWTTVPTYPTGVIGYMLCSTEGPEVDFKNPVNPIDKETTQVKSKLAPLKFYNSDIHKAAFILPSFARSMIES</sequence>
<comment type="function">
    <text evidence="6 7 9">Involved in the biosynthesis of pyridine alkaloid natural products, leading mainly to the production of anabasine, anatabine, nicotine and nornicotine, effective deterrents against herbivores with antiparasitic and pesticide properties (neurotoxins); nornicotine serves as the precursor in the synthesis of the carcinogen compound N'-nitrosonornicotine (NNN) (PubMed:10598105, PubMed:31276744, PubMed:34095742). Methyltransferase that mediates the conversion of putrescine to N-methylputrescine (PubMed:10598105). Promotes leaves ripening (PubMed:34095742).</text>
</comment>
<comment type="catalytic activity">
    <reaction evidence="2">
        <text>putrescine + S-adenosyl-L-methionine = N-methylputrescine + S-adenosyl-L-homocysteine + H(+)</text>
        <dbReference type="Rhea" id="RHEA:15037"/>
        <dbReference type="ChEBI" id="CHEBI:15378"/>
        <dbReference type="ChEBI" id="CHEBI:57856"/>
        <dbReference type="ChEBI" id="CHEBI:58039"/>
        <dbReference type="ChEBI" id="CHEBI:59789"/>
        <dbReference type="ChEBI" id="CHEBI:326268"/>
        <dbReference type="EC" id="2.1.1.53"/>
    </reaction>
</comment>
<comment type="pathway">
    <text evidence="10">Alkaloid biosynthesis; nicotine biosynthesis.</text>
</comment>
<comment type="tissue specificity">
    <text evidence="4">Predominantly expressed in roots.</text>
</comment>
<comment type="induction">
    <text evidence="4 5 8">Accumulates upon the removal of flower heads and young leaves (PubMed:10598105). Triggered by jasmonic acid (MeJA) (PubMed:15604714, PubMed:9869416).</text>
</comment>
<comment type="disruption phenotype">
    <text evidence="7">Plants suppressed for PMT1, PMT2, PMT3 and PMT4 exhibit strongly reduced nicotine levels but accumulate polyamines in roots, and have an impaired leaf maturation phenotype at harvest.</text>
</comment>
<comment type="similarity">
    <text evidence="2">Belongs to the class I-like SAM-binding methyltransferase superfamily. Putrescine methyltransferase family.</text>
</comment>
<feature type="chain" id="PRO_0000156543" description="Putrescine N-methyltransferase 3">
    <location>
        <begin position="1"/>
        <end position="381"/>
    </location>
</feature>
<feature type="domain" description="PABS" evidence="1">
    <location>
        <begin position="92"/>
        <end position="329"/>
    </location>
</feature>
<feature type="region of interest" description="Disordered" evidence="3">
    <location>
        <begin position="21"/>
        <end position="81"/>
    </location>
</feature>
<feature type="compositionally biased region" description="Polar residues" evidence="3">
    <location>
        <begin position="23"/>
        <end position="39"/>
    </location>
</feature>
<feature type="compositionally biased region" description="Polar residues" evidence="3">
    <location>
        <begin position="46"/>
        <end position="81"/>
    </location>
</feature>
<feature type="active site" description="Proton acceptor" evidence="1 2">
    <location>
        <position position="248"/>
    </location>
</feature>
<feature type="binding site" evidence="2">
    <location>
        <position position="123"/>
    </location>
    <ligand>
        <name>S-adenosyl-L-methionine</name>
        <dbReference type="ChEBI" id="CHEBI:59789"/>
    </ligand>
</feature>
<feature type="binding site" evidence="2">
    <location>
        <position position="198"/>
    </location>
    <ligand>
        <name>S-adenosyl-L-methionine</name>
        <dbReference type="ChEBI" id="CHEBI:59789"/>
    </ligand>
</feature>
<feature type="binding site" evidence="2">
    <location>
        <begin position="229"/>
        <end position="230"/>
    </location>
    <ligand>
        <name>S-adenosyl-L-methionine</name>
        <dbReference type="ChEBI" id="CHEBI:59789"/>
    </ligand>
</feature>
<feature type="binding site" evidence="2">
    <location>
        <position position="317"/>
    </location>
    <ligand>
        <name>S-adenosyl-L-methionine</name>
        <dbReference type="ChEBI" id="CHEBI:59789"/>
    </ligand>
</feature>
<feature type="sequence conflict" description="In Ref. 3; AGC24706." evidence="10" ref="3">
    <original>F</original>
    <variation>S</variation>
    <location>
        <position position="107"/>
    </location>
</feature>
<feature type="sequence conflict" description="In Ref. 3; AFJ11561." evidence="10" ref="3">
    <original>Q</original>
    <variation>H</variation>
    <location>
        <position position="238"/>
    </location>
</feature>
<feature type="sequence conflict" description="In Ref. 3; AFJ11561." evidence="10" ref="3">
    <original>K</original>
    <variation>E</variation>
    <location>
        <position position="351"/>
    </location>
</feature>
<accession>Q9SEH5</accession>
<accession>A0A1S4ANJ0</accession>
<accession>I1Z0D3</accession>
<accession>L7SV57</accession>
<proteinExistence type="evidence at transcript level"/>